<comment type="function">
    <text evidence="1">Binds to 23S rRNA. Forms part of two intersubunit bridges in the 70S ribosome.</text>
</comment>
<comment type="subunit">
    <text evidence="1">Part of the 50S ribosomal subunit. Forms a cluster with proteins L3 and L19. In the 70S ribosome, L14 and L19 interact and together make contacts with the 16S rRNA in bridges B5 and B8.</text>
</comment>
<comment type="similarity">
    <text evidence="1">Belongs to the universal ribosomal protein uL14 family.</text>
</comment>
<accession>Q5X849</accession>
<sequence length="121" mass="13388">MIQMQTVLEVADNSGARKVMCIKVLGGSHRRYARVGDVIKVSVKDAIPRSKVKKGAVMRAVVVRTAQGVRRDDGSLIRFDDNAAVLLNNQNEPIGTRIFGPVTRELRERFMKIISLAAEVL</sequence>
<protein>
    <recommendedName>
        <fullName evidence="1">Large ribosomal subunit protein uL14</fullName>
    </recommendedName>
    <alternativeName>
        <fullName evidence="2">50S ribosomal protein L14</fullName>
    </alternativeName>
</protein>
<keyword id="KW-0687">Ribonucleoprotein</keyword>
<keyword id="KW-0689">Ribosomal protein</keyword>
<keyword id="KW-0694">RNA-binding</keyword>
<keyword id="KW-0699">rRNA-binding</keyword>
<organism>
    <name type="scientific">Legionella pneumophila (strain Paris)</name>
    <dbReference type="NCBI Taxonomy" id="297246"/>
    <lineage>
        <taxon>Bacteria</taxon>
        <taxon>Pseudomonadati</taxon>
        <taxon>Pseudomonadota</taxon>
        <taxon>Gammaproteobacteria</taxon>
        <taxon>Legionellales</taxon>
        <taxon>Legionellaceae</taxon>
        <taxon>Legionella</taxon>
    </lineage>
</organism>
<feature type="chain" id="PRO_1000055614" description="Large ribosomal subunit protein uL14">
    <location>
        <begin position="1"/>
        <end position="121"/>
    </location>
</feature>
<proteinExistence type="inferred from homology"/>
<dbReference type="EMBL" id="CR628336">
    <property type="protein sequence ID" value="CAH11552.1"/>
    <property type="molecule type" value="Genomic_DNA"/>
</dbReference>
<dbReference type="RefSeq" id="WP_010946088.1">
    <property type="nucleotide sequence ID" value="NC_006368.1"/>
</dbReference>
<dbReference type="SMR" id="Q5X849"/>
<dbReference type="GeneID" id="57034342"/>
<dbReference type="KEGG" id="lpp:lpp0404"/>
<dbReference type="LegioList" id="lpp0404"/>
<dbReference type="HOGENOM" id="CLU_095071_2_1_6"/>
<dbReference type="GO" id="GO:0022625">
    <property type="term" value="C:cytosolic large ribosomal subunit"/>
    <property type="evidence" value="ECO:0007669"/>
    <property type="project" value="TreeGrafter"/>
</dbReference>
<dbReference type="GO" id="GO:0070180">
    <property type="term" value="F:large ribosomal subunit rRNA binding"/>
    <property type="evidence" value="ECO:0007669"/>
    <property type="project" value="TreeGrafter"/>
</dbReference>
<dbReference type="GO" id="GO:0003735">
    <property type="term" value="F:structural constituent of ribosome"/>
    <property type="evidence" value="ECO:0007669"/>
    <property type="project" value="InterPro"/>
</dbReference>
<dbReference type="GO" id="GO:0006412">
    <property type="term" value="P:translation"/>
    <property type="evidence" value="ECO:0007669"/>
    <property type="project" value="UniProtKB-UniRule"/>
</dbReference>
<dbReference type="CDD" id="cd00337">
    <property type="entry name" value="Ribosomal_uL14"/>
    <property type="match status" value="1"/>
</dbReference>
<dbReference type="FunFam" id="2.40.150.20:FF:000001">
    <property type="entry name" value="50S ribosomal protein L14"/>
    <property type="match status" value="1"/>
</dbReference>
<dbReference type="Gene3D" id="2.40.150.20">
    <property type="entry name" value="Ribosomal protein L14"/>
    <property type="match status" value="1"/>
</dbReference>
<dbReference type="HAMAP" id="MF_01367">
    <property type="entry name" value="Ribosomal_uL14"/>
    <property type="match status" value="1"/>
</dbReference>
<dbReference type="InterPro" id="IPR000218">
    <property type="entry name" value="Ribosomal_uL14"/>
</dbReference>
<dbReference type="InterPro" id="IPR005745">
    <property type="entry name" value="Ribosomal_uL14_bac-type"/>
</dbReference>
<dbReference type="InterPro" id="IPR019972">
    <property type="entry name" value="Ribosomal_uL14_CS"/>
</dbReference>
<dbReference type="InterPro" id="IPR036853">
    <property type="entry name" value="Ribosomal_uL14_sf"/>
</dbReference>
<dbReference type="NCBIfam" id="TIGR01067">
    <property type="entry name" value="rplN_bact"/>
    <property type="match status" value="1"/>
</dbReference>
<dbReference type="PANTHER" id="PTHR11761">
    <property type="entry name" value="50S/60S RIBOSOMAL PROTEIN L14/L23"/>
    <property type="match status" value="1"/>
</dbReference>
<dbReference type="PANTHER" id="PTHR11761:SF3">
    <property type="entry name" value="LARGE RIBOSOMAL SUBUNIT PROTEIN UL14M"/>
    <property type="match status" value="1"/>
</dbReference>
<dbReference type="Pfam" id="PF00238">
    <property type="entry name" value="Ribosomal_L14"/>
    <property type="match status" value="1"/>
</dbReference>
<dbReference type="SMART" id="SM01374">
    <property type="entry name" value="Ribosomal_L14"/>
    <property type="match status" value="1"/>
</dbReference>
<dbReference type="SUPFAM" id="SSF50193">
    <property type="entry name" value="Ribosomal protein L14"/>
    <property type="match status" value="1"/>
</dbReference>
<dbReference type="PROSITE" id="PS00049">
    <property type="entry name" value="RIBOSOMAL_L14"/>
    <property type="match status" value="1"/>
</dbReference>
<reference key="1">
    <citation type="journal article" date="2004" name="Nat. Genet.">
        <title>Evidence in the Legionella pneumophila genome for exploitation of host cell functions and high genome plasticity.</title>
        <authorList>
            <person name="Cazalet C."/>
            <person name="Rusniok C."/>
            <person name="Brueggemann H."/>
            <person name="Zidane N."/>
            <person name="Magnier A."/>
            <person name="Ma L."/>
            <person name="Tichit M."/>
            <person name="Jarraud S."/>
            <person name="Bouchier C."/>
            <person name="Vandenesch F."/>
            <person name="Kunst F."/>
            <person name="Etienne J."/>
            <person name="Glaser P."/>
            <person name="Buchrieser C."/>
        </authorList>
    </citation>
    <scope>NUCLEOTIDE SEQUENCE [LARGE SCALE GENOMIC DNA]</scope>
    <source>
        <strain>Paris</strain>
    </source>
</reference>
<evidence type="ECO:0000255" key="1">
    <source>
        <dbReference type="HAMAP-Rule" id="MF_01367"/>
    </source>
</evidence>
<evidence type="ECO:0000305" key="2"/>
<gene>
    <name evidence="1" type="primary">rplN</name>
    <name type="ordered locus">lpp0404</name>
</gene>
<name>RL14_LEGPA</name>